<name>HEMA_MONPV</name>
<organism>
    <name type="scientific">Monkeypox virus</name>
    <dbReference type="NCBI Taxonomy" id="10244"/>
    <lineage>
        <taxon>Viruses</taxon>
        <taxon>Varidnaviria</taxon>
        <taxon>Bamfordvirae</taxon>
        <taxon>Nucleocytoviricota</taxon>
        <taxon>Pokkesviricetes</taxon>
        <taxon>Chitovirales</taxon>
        <taxon>Poxviridae</taxon>
        <taxon>Chordopoxvirinae</taxon>
        <taxon>Orthopoxvirus</taxon>
    </lineage>
</organism>
<protein>
    <recommendedName>
        <fullName>Protein OPG185</fullName>
    </recommendedName>
    <alternativeName>
        <fullName>Hemagglutinin</fullName>
    </alternativeName>
</protein>
<evidence type="ECO:0000250" key="1">
    <source>
        <dbReference type="UniProtKB" id="Q01218"/>
    </source>
</evidence>
<evidence type="ECO:0000255" key="2"/>
<evidence type="ECO:0000255" key="3">
    <source>
        <dbReference type="PROSITE-ProRule" id="PRU00498"/>
    </source>
</evidence>
<evidence type="ECO:0000305" key="4"/>
<accession>Q8BEJ6</accession>
<proteinExistence type="evidence at transcript level"/>
<keyword id="KW-1015">Disulfide bond</keyword>
<keyword id="KW-0244">Early protein</keyword>
<keyword id="KW-0325">Glycoprotein</keyword>
<keyword id="KW-0348">Hemagglutinin</keyword>
<keyword id="KW-1043">Host membrane</keyword>
<keyword id="KW-0393">Immunoglobulin domain</keyword>
<keyword id="KW-0426">Late protein</keyword>
<keyword id="KW-0472">Membrane</keyword>
<keyword id="KW-1185">Reference proteome</keyword>
<keyword id="KW-0732">Signal</keyword>
<keyword id="KW-0812">Transmembrane</keyword>
<keyword id="KW-1133">Transmembrane helix</keyword>
<keyword id="KW-0261">Viral envelope protein</keyword>
<keyword id="KW-0946">Virion</keyword>
<gene>
    <name type="primary">OPG185</name>
    <name type="synonym">HA</name>
    <name type="ORF">MPXVgp163</name>
</gene>
<dbReference type="EMBL" id="MT903340">
    <property type="protein sequence ID" value="QNP13031.1"/>
    <property type="molecule type" value="Genomic_DNA"/>
</dbReference>
<dbReference type="RefSeq" id="YP_010377158.1">
    <property type="nucleotide sequence ID" value="NC_063383.1"/>
</dbReference>
<dbReference type="GeneID" id="72551572"/>
<dbReference type="Proteomes" id="UP000516359">
    <property type="component" value="Genome"/>
</dbReference>
<dbReference type="GO" id="GO:0033644">
    <property type="term" value="C:host cell membrane"/>
    <property type="evidence" value="ECO:0007669"/>
    <property type="project" value="UniProtKB-SubCell"/>
</dbReference>
<dbReference type="GO" id="GO:0016020">
    <property type="term" value="C:membrane"/>
    <property type="evidence" value="ECO:0007669"/>
    <property type="project" value="UniProtKB-KW"/>
</dbReference>
<dbReference type="GO" id="GO:0019031">
    <property type="term" value="C:viral envelope"/>
    <property type="evidence" value="ECO:0007669"/>
    <property type="project" value="UniProtKB-KW"/>
</dbReference>
<dbReference type="GO" id="GO:0055036">
    <property type="term" value="C:virion membrane"/>
    <property type="evidence" value="ECO:0007669"/>
    <property type="project" value="UniProtKB-SubCell"/>
</dbReference>
<dbReference type="Gene3D" id="2.60.40.10">
    <property type="entry name" value="Immunoglobulins"/>
    <property type="match status" value="1"/>
</dbReference>
<dbReference type="InterPro" id="IPR007110">
    <property type="entry name" value="Ig-like_dom"/>
</dbReference>
<dbReference type="InterPro" id="IPR036179">
    <property type="entry name" value="Ig-like_dom_sf"/>
</dbReference>
<dbReference type="InterPro" id="IPR013783">
    <property type="entry name" value="Ig-like_fold"/>
</dbReference>
<dbReference type="InterPro" id="IPR003599">
    <property type="entry name" value="Ig_sub"/>
</dbReference>
<dbReference type="InterPro" id="IPR013106">
    <property type="entry name" value="Ig_V-set"/>
</dbReference>
<dbReference type="Pfam" id="PF07686">
    <property type="entry name" value="V-set"/>
    <property type="match status" value="1"/>
</dbReference>
<dbReference type="SMART" id="SM00409">
    <property type="entry name" value="IG"/>
    <property type="match status" value="1"/>
</dbReference>
<dbReference type="SUPFAM" id="SSF48726">
    <property type="entry name" value="Immunoglobulin"/>
    <property type="match status" value="1"/>
</dbReference>
<dbReference type="PROSITE" id="PS50835">
    <property type="entry name" value="IG_LIKE"/>
    <property type="match status" value="1"/>
</dbReference>
<organismHost>
    <name type="scientific">Cynomys gunnisoni</name>
    <name type="common">Gunnison's prairie dog</name>
    <name type="synonym">Spermophilus gunnisoni</name>
    <dbReference type="NCBI Taxonomy" id="45479"/>
</organismHost>
<organismHost>
    <name type="scientific">Cynomys leucurus</name>
    <name type="common">White-tailed prairie dog</name>
    <dbReference type="NCBI Taxonomy" id="99825"/>
</organismHost>
<organismHost>
    <name type="scientific">Cynomys ludovicianus</name>
    <name type="common">Black-tailed prairie dog</name>
    <dbReference type="NCBI Taxonomy" id="45480"/>
</organismHost>
<organismHost>
    <name type="scientific">Cynomys mexicanus</name>
    <name type="common">Mexican prairie dog</name>
    <dbReference type="NCBI Taxonomy" id="99826"/>
</organismHost>
<organismHost>
    <name type="scientific">Cynomys parvidens</name>
    <name type="common">Utah prairie dog</name>
    <dbReference type="NCBI Taxonomy" id="99827"/>
</organismHost>
<organismHost>
    <name type="scientific">Gliridae</name>
    <name type="common">dormice</name>
    <dbReference type="NCBI Taxonomy" id="30650"/>
</organismHost>
<organismHost>
    <name type="scientific">Heliosciurus ruwenzorii</name>
    <name type="common">Ruwenzori sun squirrel</name>
    <dbReference type="NCBI Taxonomy" id="226685"/>
</organismHost>
<organismHost>
    <name type="scientific">Homo sapiens</name>
    <name type="common">Human</name>
    <dbReference type="NCBI Taxonomy" id="9606"/>
</organismHost>
<organismHost>
    <name type="scientific">Mus musculus</name>
    <name type="common">Mouse</name>
    <dbReference type="NCBI Taxonomy" id="10090"/>
</organismHost>
<comment type="function">
    <text evidence="1">Prevents cell to cell fusion by interacting with and directing the viral OPG040 protein on the host plasma membrane. The OPG185-OPG040 complex associates with components of the entry fusion complex (EFC) presumably to avoid superinfection and syncytium formation. Via its interaction with C3/VCP protein, protects the infected cell and probably also the extracellular enveloped virus from complement attack.</text>
</comment>
<comment type="subunit">
    <text evidence="1">Heterodimerizes with OPG040. The heterodimer OPG185-OPG040 interacts with components of the entry fusion complex OPG143 and OPG094. Heterodimer with C3/VPC protein; disulfide-linked.</text>
</comment>
<comment type="subcellular location">
    <subcellularLocation>
        <location evidence="1">Virion membrane</location>
        <topology evidence="1">Single-pass type I membrane protein</topology>
    </subcellularLocation>
    <subcellularLocation>
        <location evidence="1">Host membrane</location>
        <topology evidence="1">Single-pass type I membrane protein</topology>
    </subcellularLocation>
    <text evidence="1">Component of extracellular enveloped virus (EEV) but not intracellular mature virus (IMV). Component of the outermost membrane of EEV.</text>
</comment>
<comment type="induction">
    <text>Expressed in the early phase of the viral replicative cycle.</text>
</comment>
<comment type="PTM">
    <text evidence="1">Glycosylated; contains phosphate and sulfate-substituted glycans. O-glycosylation is required for hemagglutination and hemadsorption activities of infected cell membranes.</text>
</comment>
<comment type="similarity">
    <text evidence="4">Belongs to the orthopoxvirus OPG185 family.</text>
</comment>
<feature type="signal peptide" evidence="2">
    <location>
        <begin position="1"/>
        <end position="16"/>
    </location>
</feature>
<feature type="chain" id="PRO_0000457590" description="Protein OPG185" evidence="2">
    <location>
        <begin position="17"/>
        <end position="313"/>
    </location>
</feature>
<feature type="topological domain" description="Virion surface" evidence="2">
    <location>
        <begin position="17"/>
        <end position="274"/>
    </location>
</feature>
<feature type="transmembrane region" description="Helical" evidence="2">
    <location>
        <begin position="275"/>
        <end position="295"/>
    </location>
</feature>
<feature type="topological domain" description="Intravirion" evidence="2">
    <location>
        <begin position="296"/>
        <end position="313"/>
    </location>
</feature>
<feature type="glycosylation site" description="N-linked (GlcNAc...) asparagine; by host" evidence="3">
    <location>
        <position position="37"/>
    </location>
</feature>
<feature type="glycosylation site" description="N-linked (GlcNAc...) asparagine; by host" evidence="3">
    <location>
        <position position="69"/>
    </location>
</feature>
<feature type="glycosylation site" description="N-linked (GlcNAc...) asparagine; by host" evidence="3">
    <location>
        <position position="112"/>
    </location>
</feature>
<feature type="glycosylation site" description="N-linked (GlcNAc...) asparagine; by host" evidence="3">
    <location>
        <position position="159"/>
    </location>
</feature>
<feature type="glycosylation site" description="N-linked (GlcNAc...) asparagine; by host" evidence="3">
    <location>
        <position position="194"/>
    </location>
</feature>
<feature type="glycosylation site" description="N-linked (GlcNAc...) asparagine; by host" evidence="3">
    <location>
        <position position="252"/>
    </location>
</feature>
<reference key="1">
    <citation type="journal article" date="2022" name="J. Infect. Dis.">
        <title>Exportation of Monkeypox virus from the African continent.</title>
        <authorList>
            <person name="Mauldin M.R."/>
            <person name="McCollum A.M."/>
            <person name="Nakazawa Y.J."/>
            <person name="Mandra A."/>
            <person name="Whitehouse E.R."/>
            <person name="Davidson W."/>
            <person name="Zhao H."/>
            <person name="Gao J."/>
            <person name="Li Y."/>
            <person name="Doty J."/>
            <person name="Yinka-Ogunleye A."/>
            <person name="Akinpelu A."/>
            <person name="Aruna O."/>
            <person name="Naidoo D."/>
            <person name="Lewandowski K."/>
            <person name="Afrough B."/>
            <person name="Graham V."/>
            <person name="Aarons E."/>
            <person name="Hewson R."/>
            <person name="Vipond R."/>
            <person name="Dunning J."/>
            <person name="Chand M."/>
            <person name="Brown C."/>
            <person name="Cohen-Gihon I."/>
            <person name="Erez N."/>
            <person name="Shifman O."/>
            <person name="Israeli O."/>
            <person name="Sharon M."/>
            <person name="Schwartz E."/>
            <person name="Beth-Din A."/>
            <person name="Zvi A."/>
            <person name="Mak T.M."/>
            <person name="Ng Y.K."/>
            <person name="Cui L."/>
            <person name="Lin R.T.P."/>
            <person name="Olson V.A."/>
            <person name="Brooks T."/>
            <person name="Paran N."/>
            <person name="Ihekweazu C."/>
            <person name="Reynolds M.G."/>
        </authorList>
    </citation>
    <scope>NUCLEOTIDE SEQUENCE [LARGE SCALE GENOMIC DNA]</scope>
    <source>
        <strain>MPXV-M5312_HM12_Rivers</strain>
    </source>
</reference>
<sequence length="313" mass="34452">MTQLPILLLLISLVYATPSPQTSKKIGDDATISCSRNNTNYYVVMSAWYKEPNSIILLAAKSDVLYFDNYTKDKISYDSPYDDLVTTITIKSLTAGDAGTYICAFFMTSTTNDTDKVDYEEYSIELIVNTDSESTIDIILSGSTPETISEKPEDIDNSNCSSVFEITTPEPITDNVDDHTDTVTYTSDSINTVNASSGESTTDEIPEPITDKEEDHTVTDTVSYTTVSTSSGIVTTKSTTDDADLYDTYNDNDTVPPTTVGGSTTSISNYKTKDFVEIFGITTLIILSAVAIFCITYYICNKHPRKYKTENKV</sequence>